<accession>A1A9U6</accession>
<reference key="1">
    <citation type="journal article" date="2007" name="J. Bacteriol.">
        <title>The genome sequence of avian pathogenic Escherichia coli strain O1:K1:H7 shares strong similarities with human extraintestinal pathogenic E. coli genomes.</title>
        <authorList>
            <person name="Johnson T.J."/>
            <person name="Kariyawasam S."/>
            <person name="Wannemuehler Y."/>
            <person name="Mangiamele P."/>
            <person name="Johnson S.J."/>
            <person name="Doetkott C."/>
            <person name="Skyberg J.A."/>
            <person name="Lynne A.M."/>
            <person name="Johnson J.R."/>
            <person name="Nolan L.K."/>
        </authorList>
    </citation>
    <scope>NUCLEOTIDE SEQUENCE [LARGE SCALE GENOMIC DNA]</scope>
</reference>
<evidence type="ECO:0000255" key="1">
    <source>
        <dbReference type="HAMAP-Rule" id="MF_01069"/>
    </source>
</evidence>
<organism>
    <name type="scientific">Escherichia coli O1:K1 / APEC</name>
    <dbReference type="NCBI Taxonomy" id="405955"/>
    <lineage>
        <taxon>Bacteria</taxon>
        <taxon>Pseudomonadati</taxon>
        <taxon>Pseudomonadota</taxon>
        <taxon>Gammaproteobacteria</taxon>
        <taxon>Enterobacterales</taxon>
        <taxon>Enterobacteriaceae</taxon>
        <taxon>Escherichia</taxon>
    </lineage>
</organism>
<sequence>MKHKLQMMKMRWLSAAVMLTLYTSSSWAFSIDDVAKQAQSLAGKGYEAPKSNLPSVFRDMKYADYQQIQFNHDKAYWNNLKTPFKLEFYHQGMYFDTPVKINEVTATAVKRIKYSPDYFTFGDVQHDKDTVKDLGFAGFKVLYPINSKDKNDEIVSMLGASYFRVIGAGQVYGLSARGLAIDTALPSGEEFPRFKEFWIERPKPTDKRLTIYALLDSPRATGAYKFVVMPGRDTVVDVQSKIYLRDKVGKLGVAPLTSMFLFGPNQPSPANNYRPELHDSNGLSIHAGNGEWIWRPLNNPKHLAVSSFSMENPQGFGLLQRGRDFSRFEDLDDRYDLRPSAWVTPKGEWGKGSVELVEIPTNDETNDNIVAYWTPDQLPEPGKEMNFKYTITFSRDEDKLHAPDNAWVQQTRRSTGDVKQSNLIRQPDGTIAFVVDFTGAEMKKLPEDTPVTAQTSIGDNGEIVESTVRYNPVTKGWRLVMRVKVKDAKKTTEMRAALVNADQTLSETWSYQLPANE</sequence>
<protein>
    <recommendedName>
        <fullName evidence="1">Glucans biosynthesis protein G</fullName>
    </recommendedName>
</protein>
<feature type="signal peptide" evidence="1">
    <location>
        <begin position="1"/>
        <end position="28"/>
    </location>
</feature>
<feature type="chain" id="PRO_1000064558" description="Glucans biosynthesis protein G">
    <location>
        <begin position="29"/>
        <end position="517"/>
    </location>
</feature>
<comment type="function">
    <text evidence="1">Involved in the biosynthesis of osmoregulated periplasmic glucans (OPGs).</text>
</comment>
<comment type="pathway">
    <text evidence="1">Glycan metabolism; osmoregulated periplasmic glucan (OPG) biosynthesis.</text>
</comment>
<comment type="subcellular location">
    <subcellularLocation>
        <location evidence="1">Periplasm</location>
    </subcellularLocation>
</comment>
<comment type="similarity">
    <text evidence="1">Belongs to the OpgD/OpgG family.</text>
</comment>
<dbReference type="EMBL" id="CP000468">
    <property type="protein sequence ID" value="ABJ00436.1"/>
    <property type="molecule type" value="Genomic_DNA"/>
</dbReference>
<dbReference type="SMR" id="A1A9U6"/>
<dbReference type="KEGG" id="ecv:APECO1_133"/>
<dbReference type="HOGENOM" id="CLU_023403_2_0_6"/>
<dbReference type="UniPathway" id="UPA00637"/>
<dbReference type="Proteomes" id="UP000008216">
    <property type="component" value="Chromosome"/>
</dbReference>
<dbReference type="GO" id="GO:0030288">
    <property type="term" value="C:outer membrane-bounded periplasmic space"/>
    <property type="evidence" value="ECO:0007669"/>
    <property type="project" value="TreeGrafter"/>
</dbReference>
<dbReference type="GO" id="GO:0030246">
    <property type="term" value="F:carbohydrate binding"/>
    <property type="evidence" value="ECO:0007669"/>
    <property type="project" value="InterPro"/>
</dbReference>
<dbReference type="GO" id="GO:0003824">
    <property type="term" value="F:catalytic activity"/>
    <property type="evidence" value="ECO:0007669"/>
    <property type="project" value="InterPro"/>
</dbReference>
<dbReference type="GO" id="GO:0051274">
    <property type="term" value="P:beta-glucan biosynthetic process"/>
    <property type="evidence" value="ECO:0007669"/>
    <property type="project" value="TreeGrafter"/>
</dbReference>
<dbReference type="FunFam" id="2.60.40.10:FF:000294">
    <property type="entry name" value="Glucans biosynthesis protein G"/>
    <property type="match status" value="1"/>
</dbReference>
<dbReference type="FunFam" id="2.70.98.10:FF:000001">
    <property type="entry name" value="Glucans biosynthesis protein G"/>
    <property type="match status" value="1"/>
</dbReference>
<dbReference type="Gene3D" id="2.70.98.10">
    <property type="match status" value="1"/>
</dbReference>
<dbReference type="Gene3D" id="2.60.40.10">
    <property type="entry name" value="Immunoglobulins"/>
    <property type="match status" value="1"/>
</dbReference>
<dbReference type="HAMAP" id="MF_01069">
    <property type="entry name" value="MdoG_OpgG"/>
    <property type="match status" value="1"/>
</dbReference>
<dbReference type="InterPro" id="IPR011013">
    <property type="entry name" value="Gal_mutarotase_sf_dom"/>
</dbReference>
<dbReference type="InterPro" id="IPR014718">
    <property type="entry name" value="GH-type_carb-bd"/>
</dbReference>
<dbReference type="InterPro" id="IPR014438">
    <property type="entry name" value="Glucan_biosyn_MdoG/MdoD"/>
</dbReference>
<dbReference type="InterPro" id="IPR007444">
    <property type="entry name" value="Glucan_biosyn_MdoG_C"/>
</dbReference>
<dbReference type="InterPro" id="IPR013783">
    <property type="entry name" value="Ig-like_fold"/>
</dbReference>
<dbReference type="InterPro" id="IPR014756">
    <property type="entry name" value="Ig_E-set"/>
</dbReference>
<dbReference type="InterPro" id="IPR023704">
    <property type="entry name" value="MdoG_OpgG"/>
</dbReference>
<dbReference type="PANTHER" id="PTHR30504">
    <property type="entry name" value="GLUCANS BIOSYNTHESIS PROTEIN"/>
    <property type="match status" value="1"/>
</dbReference>
<dbReference type="PANTHER" id="PTHR30504:SF4">
    <property type="entry name" value="GLUCANS BIOSYNTHESIS PROTEIN G"/>
    <property type="match status" value="1"/>
</dbReference>
<dbReference type="Pfam" id="PF04349">
    <property type="entry name" value="MdoG"/>
    <property type="match status" value="1"/>
</dbReference>
<dbReference type="PIRSF" id="PIRSF006281">
    <property type="entry name" value="MdoG"/>
    <property type="match status" value="1"/>
</dbReference>
<dbReference type="SUPFAM" id="SSF81296">
    <property type="entry name" value="E set domains"/>
    <property type="match status" value="1"/>
</dbReference>
<dbReference type="SUPFAM" id="SSF74650">
    <property type="entry name" value="Galactose mutarotase-like"/>
    <property type="match status" value="1"/>
</dbReference>
<keyword id="KW-0574">Periplasm</keyword>
<keyword id="KW-1185">Reference proteome</keyword>
<keyword id="KW-0732">Signal</keyword>
<name>OPGG_ECOK1</name>
<gene>
    <name evidence="1" type="primary">mdoG</name>
    <name evidence="1" type="synonym">opgG</name>
    <name type="ordered locus">Ecok1_09420</name>
    <name type="ORF">APECO1_133</name>
</gene>
<proteinExistence type="inferred from homology"/>